<sequence>KCCMRPICTCPCCIG</sequence>
<dbReference type="ConoServer" id="1488">
    <property type="toxin name" value="Reg12k"/>
</dbReference>
<dbReference type="GO" id="GO:0005576">
    <property type="term" value="C:extracellular region"/>
    <property type="evidence" value="ECO:0007669"/>
    <property type="project" value="UniProtKB-SubCell"/>
</dbReference>
<dbReference type="GO" id="GO:0090729">
    <property type="term" value="F:toxin activity"/>
    <property type="evidence" value="ECO:0007669"/>
    <property type="project" value="UniProtKB-KW"/>
</dbReference>
<organism>
    <name type="scientific">Conus regius</name>
    <name type="common">Crown cone</name>
    <dbReference type="NCBI Taxonomy" id="101314"/>
    <lineage>
        <taxon>Eukaryota</taxon>
        <taxon>Metazoa</taxon>
        <taxon>Spiralia</taxon>
        <taxon>Lophotrochozoa</taxon>
        <taxon>Mollusca</taxon>
        <taxon>Gastropoda</taxon>
        <taxon>Caenogastropoda</taxon>
        <taxon>Neogastropoda</taxon>
        <taxon>Conoidea</taxon>
        <taxon>Conidae</taxon>
        <taxon>Conus</taxon>
        <taxon>Stephanoconus</taxon>
    </lineage>
</organism>
<name>CM3CD_CONRE</name>
<proteinExistence type="evidence at protein level"/>
<evidence type="ECO:0000250" key="1">
    <source>
        <dbReference type="UniProtKB" id="Q5EHP3"/>
    </source>
</evidence>
<evidence type="ECO:0000269" key="2">
    <source>
    </source>
</evidence>
<evidence type="ECO:0000303" key="3">
    <source>
    </source>
</evidence>
<evidence type="ECO:0000305" key="4"/>
<evidence type="ECO:0000305" key="5">
    <source>
    </source>
</evidence>
<keyword id="KW-0903">Direct protein sequencing</keyword>
<keyword id="KW-1015">Disulfide bond</keyword>
<keyword id="KW-0379">Hydroxylation</keyword>
<keyword id="KW-0964">Secreted</keyword>
<keyword id="KW-0800">Toxin</keyword>
<protein>
    <recommendedName>
        <fullName evidence="3">Conotoxin Reg12d</fullName>
    </recommendedName>
    <alternativeName>
        <fullName evidence="4">Reg12k</fullName>
    </alternativeName>
</protein>
<reference key="1">
    <citation type="journal article" date="2006" name="Prog. Mol. Subcell. Biol.">
        <title>Hyperhydroxylation: a new strategy for neuronal targeting by venomous marine molluscs.</title>
        <authorList>
            <person name="Franco A."/>
            <person name="Pisarewicz K."/>
            <person name="Moller C."/>
            <person name="Mora D."/>
            <person name="Fields G.B."/>
            <person name="Mari F."/>
        </authorList>
    </citation>
    <scope>PROTEIN SEQUENCE</scope>
    <scope>SUBCELLULAR LOCATION</scope>
    <scope>HYDROXYLATION AT PRO-11</scope>
    <source>
        <tissue>Venom</tissue>
    </source>
</reference>
<accession>P85022</accession>
<comment type="subcellular location">
    <subcellularLocation>
        <location evidence="2">Secreted</location>
    </subcellularLocation>
</comment>
<comment type="tissue specificity">
    <text evidence="5">Expressed by the venom duct.</text>
</comment>
<comment type="domain">
    <text evidence="4">The cysteine framework is III (CC-C-C-CC). Classified in the M-1 branch, since 1 residue stands between the fourth and the fifth cysteine residues.</text>
</comment>
<comment type="similarity">
    <text evidence="4">Belongs to the conotoxin M superfamily.</text>
</comment>
<feature type="peptide" id="PRO_0000259396" description="Conotoxin Reg12d" evidence="2">
    <location>
        <begin position="1"/>
        <end position="15"/>
    </location>
</feature>
<feature type="modified residue" description="4-hydroxyproline" evidence="2">
    <location>
        <position position="11"/>
    </location>
</feature>
<feature type="disulfide bond" evidence="1">
    <location>
        <begin position="2"/>
        <end position="12"/>
    </location>
</feature>
<feature type="disulfide bond" evidence="1">
    <location>
        <begin position="3"/>
        <end position="10"/>
    </location>
</feature>
<feature type="disulfide bond" evidence="1">
    <location>
        <begin position="8"/>
        <end position="13"/>
    </location>
</feature>